<feature type="chain" id="PRO_1000097106" description="Pantothenate synthetase">
    <location>
        <begin position="1"/>
        <end position="284"/>
    </location>
</feature>
<feature type="active site" description="Proton donor" evidence="1">
    <location>
        <position position="37"/>
    </location>
</feature>
<feature type="binding site" evidence="1">
    <location>
        <begin position="30"/>
        <end position="37"/>
    </location>
    <ligand>
        <name>ATP</name>
        <dbReference type="ChEBI" id="CHEBI:30616"/>
    </ligand>
</feature>
<feature type="binding site" evidence="1">
    <location>
        <position position="61"/>
    </location>
    <ligand>
        <name>(R)-pantoate</name>
        <dbReference type="ChEBI" id="CHEBI:15980"/>
    </ligand>
</feature>
<feature type="binding site" evidence="1">
    <location>
        <position position="61"/>
    </location>
    <ligand>
        <name>beta-alanine</name>
        <dbReference type="ChEBI" id="CHEBI:57966"/>
    </ligand>
</feature>
<feature type="binding site" evidence="1">
    <location>
        <begin position="149"/>
        <end position="152"/>
    </location>
    <ligand>
        <name>ATP</name>
        <dbReference type="ChEBI" id="CHEBI:30616"/>
    </ligand>
</feature>
<feature type="binding site" evidence="1">
    <location>
        <position position="155"/>
    </location>
    <ligand>
        <name>(R)-pantoate</name>
        <dbReference type="ChEBI" id="CHEBI:15980"/>
    </ligand>
</feature>
<feature type="binding site" evidence="1">
    <location>
        <position position="178"/>
    </location>
    <ligand>
        <name>ATP</name>
        <dbReference type="ChEBI" id="CHEBI:30616"/>
    </ligand>
</feature>
<feature type="binding site" evidence="1">
    <location>
        <begin position="186"/>
        <end position="189"/>
    </location>
    <ligand>
        <name>ATP</name>
        <dbReference type="ChEBI" id="CHEBI:30616"/>
    </ligand>
</feature>
<gene>
    <name evidence="1" type="primary">panC</name>
    <name type="ordered locus">SeSA_A0201</name>
</gene>
<name>PANC_SALSV</name>
<dbReference type="EC" id="6.3.2.1" evidence="1"/>
<dbReference type="EMBL" id="CP001127">
    <property type="protein sequence ID" value="ACF90619.1"/>
    <property type="molecule type" value="Genomic_DNA"/>
</dbReference>
<dbReference type="RefSeq" id="WP_000905340.1">
    <property type="nucleotide sequence ID" value="NC_011094.1"/>
</dbReference>
<dbReference type="SMR" id="B4TXN3"/>
<dbReference type="KEGG" id="sew:SeSA_A0201"/>
<dbReference type="HOGENOM" id="CLU_047148_0_0_6"/>
<dbReference type="UniPathway" id="UPA00028">
    <property type="reaction ID" value="UER00005"/>
</dbReference>
<dbReference type="Proteomes" id="UP000001865">
    <property type="component" value="Chromosome"/>
</dbReference>
<dbReference type="GO" id="GO:0005829">
    <property type="term" value="C:cytosol"/>
    <property type="evidence" value="ECO:0007669"/>
    <property type="project" value="TreeGrafter"/>
</dbReference>
<dbReference type="GO" id="GO:0005524">
    <property type="term" value="F:ATP binding"/>
    <property type="evidence" value="ECO:0007669"/>
    <property type="project" value="UniProtKB-KW"/>
</dbReference>
<dbReference type="GO" id="GO:0004592">
    <property type="term" value="F:pantoate-beta-alanine ligase activity"/>
    <property type="evidence" value="ECO:0007669"/>
    <property type="project" value="UniProtKB-UniRule"/>
</dbReference>
<dbReference type="GO" id="GO:0015940">
    <property type="term" value="P:pantothenate biosynthetic process"/>
    <property type="evidence" value="ECO:0007669"/>
    <property type="project" value="UniProtKB-UniRule"/>
</dbReference>
<dbReference type="CDD" id="cd00560">
    <property type="entry name" value="PanC"/>
    <property type="match status" value="1"/>
</dbReference>
<dbReference type="FunFam" id="3.30.1300.10:FF:000001">
    <property type="entry name" value="Pantothenate synthetase"/>
    <property type="match status" value="1"/>
</dbReference>
<dbReference type="FunFam" id="3.40.50.620:FF:000013">
    <property type="entry name" value="Pantothenate synthetase"/>
    <property type="match status" value="1"/>
</dbReference>
<dbReference type="Gene3D" id="3.40.50.620">
    <property type="entry name" value="HUPs"/>
    <property type="match status" value="1"/>
</dbReference>
<dbReference type="Gene3D" id="3.30.1300.10">
    <property type="entry name" value="Pantoate-beta-alanine ligase, C-terminal domain"/>
    <property type="match status" value="1"/>
</dbReference>
<dbReference type="HAMAP" id="MF_00158">
    <property type="entry name" value="PanC"/>
    <property type="match status" value="1"/>
</dbReference>
<dbReference type="InterPro" id="IPR003721">
    <property type="entry name" value="Pantoate_ligase"/>
</dbReference>
<dbReference type="InterPro" id="IPR042176">
    <property type="entry name" value="Pantoate_ligase_C"/>
</dbReference>
<dbReference type="InterPro" id="IPR014729">
    <property type="entry name" value="Rossmann-like_a/b/a_fold"/>
</dbReference>
<dbReference type="NCBIfam" id="TIGR00018">
    <property type="entry name" value="panC"/>
    <property type="match status" value="1"/>
</dbReference>
<dbReference type="PANTHER" id="PTHR21299">
    <property type="entry name" value="CYTIDYLATE KINASE/PANTOATE-BETA-ALANINE LIGASE"/>
    <property type="match status" value="1"/>
</dbReference>
<dbReference type="PANTHER" id="PTHR21299:SF1">
    <property type="entry name" value="PANTOATE--BETA-ALANINE LIGASE"/>
    <property type="match status" value="1"/>
</dbReference>
<dbReference type="Pfam" id="PF02569">
    <property type="entry name" value="Pantoate_ligase"/>
    <property type="match status" value="1"/>
</dbReference>
<dbReference type="SUPFAM" id="SSF52374">
    <property type="entry name" value="Nucleotidylyl transferase"/>
    <property type="match status" value="1"/>
</dbReference>
<keyword id="KW-0067">ATP-binding</keyword>
<keyword id="KW-0963">Cytoplasm</keyword>
<keyword id="KW-0436">Ligase</keyword>
<keyword id="KW-0547">Nucleotide-binding</keyword>
<keyword id="KW-0566">Pantothenate biosynthesis</keyword>
<sequence length="284" mass="31873">MLIIETLPLLRQHIRRLRQEGKRVALVPTMGNLHDGHMKLVDEAKARADVVFVSIFVNPMQFDRPDDLVRYPRTLQEDCEKLNKRKVDYVFAPAVEEIYPQGLEGQTYVDVPGLSTMLEGASRPGHFRGVSTIVSKLFNLIQPDIACFGEKDFQQLALIRKMVADMSYDIEIVGVPIIRAKDGLALSSRNSYLTAEQRKIAPGLHNVMNSIAEKLIAGNRELQEIIAIAEQELNEKGFRADDIQIRDADTLLELTETSKRAVILAAAWLGQARLIDNQSVTLAQ</sequence>
<protein>
    <recommendedName>
        <fullName evidence="1">Pantothenate synthetase</fullName>
        <shortName evidence="1">PS</shortName>
        <ecNumber evidence="1">6.3.2.1</ecNumber>
    </recommendedName>
    <alternativeName>
        <fullName evidence="1">Pantoate--beta-alanine ligase</fullName>
    </alternativeName>
    <alternativeName>
        <fullName evidence="1">Pantoate-activating enzyme</fullName>
    </alternativeName>
</protein>
<accession>B4TXN3</accession>
<evidence type="ECO:0000255" key="1">
    <source>
        <dbReference type="HAMAP-Rule" id="MF_00158"/>
    </source>
</evidence>
<proteinExistence type="inferred from homology"/>
<organism>
    <name type="scientific">Salmonella schwarzengrund (strain CVM19633)</name>
    <dbReference type="NCBI Taxonomy" id="439843"/>
    <lineage>
        <taxon>Bacteria</taxon>
        <taxon>Pseudomonadati</taxon>
        <taxon>Pseudomonadota</taxon>
        <taxon>Gammaproteobacteria</taxon>
        <taxon>Enterobacterales</taxon>
        <taxon>Enterobacteriaceae</taxon>
        <taxon>Salmonella</taxon>
    </lineage>
</organism>
<reference key="1">
    <citation type="journal article" date="2011" name="J. Bacteriol.">
        <title>Comparative genomics of 28 Salmonella enterica isolates: evidence for CRISPR-mediated adaptive sublineage evolution.</title>
        <authorList>
            <person name="Fricke W.F."/>
            <person name="Mammel M.K."/>
            <person name="McDermott P.F."/>
            <person name="Tartera C."/>
            <person name="White D.G."/>
            <person name="Leclerc J.E."/>
            <person name="Ravel J."/>
            <person name="Cebula T.A."/>
        </authorList>
    </citation>
    <scope>NUCLEOTIDE SEQUENCE [LARGE SCALE GENOMIC DNA]</scope>
    <source>
        <strain>CVM19633</strain>
    </source>
</reference>
<comment type="function">
    <text evidence="1">Catalyzes the condensation of pantoate with beta-alanine in an ATP-dependent reaction via a pantoyl-adenylate intermediate.</text>
</comment>
<comment type="catalytic activity">
    <reaction evidence="1">
        <text>(R)-pantoate + beta-alanine + ATP = (R)-pantothenate + AMP + diphosphate + H(+)</text>
        <dbReference type="Rhea" id="RHEA:10912"/>
        <dbReference type="ChEBI" id="CHEBI:15378"/>
        <dbReference type="ChEBI" id="CHEBI:15980"/>
        <dbReference type="ChEBI" id="CHEBI:29032"/>
        <dbReference type="ChEBI" id="CHEBI:30616"/>
        <dbReference type="ChEBI" id="CHEBI:33019"/>
        <dbReference type="ChEBI" id="CHEBI:57966"/>
        <dbReference type="ChEBI" id="CHEBI:456215"/>
        <dbReference type="EC" id="6.3.2.1"/>
    </reaction>
</comment>
<comment type="pathway">
    <text evidence="1">Cofactor biosynthesis; (R)-pantothenate biosynthesis; (R)-pantothenate from (R)-pantoate and beta-alanine: step 1/1.</text>
</comment>
<comment type="subunit">
    <text evidence="1">Homodimer.</text>
</comment>
<comment type="subcellular location">
    <subcellularLocation>
        <location evidence="1">Cytoplasm</location>
    </subcellularLocation>
</comment>
<comment type="miscellaneous">
    <text evidence="1">The reaction proceeds by a bi uni uni bi ping pong mechanism.</text>
</comment>
<comment type="similarity">
    <text evidence="1">Belongs to the pantothenate synthetase family.</text>
</comment>